<protein>
    <recommendedName>
        <fullName>Transactivation protein</fullName>
    </recommendedName>
</protein>
<keyword id="KW-0010">Activator</keyword>
<keyword id="KW-0238">DNA-binding</keyword>
<keyword id="KW-0426">Late protein</keyword>
<keyword id="KW-1185">Reference proteome</keyword>
<keyword id="KW-0804">Transcription</keyword>
<keyword id="KW-0805">Transcription regulation</keyword>
<comment type="function">
    <text>Positively regulates late transcription from 2 promoters in P4 and 4 promoters in P2.</text>
</comment>
<organism>
    <name type="scientific">Enterobacteria phage P4</name>
    <name type="common">Bacteriophage P4</name>
    <dbReference type="NCBI Taxonomy" id="10680"/>
    <lineage>
        <taxon>Viruses</taxon>
        <taxon>Duplodnaviria</taxon>
        <taxon>Heunggongvirae</taxon>
        <taxon>Uroviricota</taxon>
        <taxon>Caudoviricetes</taxon>
    </lineage>
</organism>
<proteinExistence type="predicted"/>
<reference key="1">
    <citation type="journal article" date="1990" name="J. Bacteriol.">
        <title>A mutation of the transactivation gene of satellite bacteriophage P4 that suppresses the rpoA109 mutation of Escherichia coli.</title>
        <authorList>
            <person name="Halling C."/>
            <person name="Sunshine M.G."/>
            <person name="Lane K.B."/>
            <person name="Six E.W."/>
            <person name="Calendar R."/>
        </authorList>
    </citation>
    <scope>NUCLEOTIDE SEQUENCE [GENOMIC DNA]</scope>
</reference>
<reference key="2">
    <citation type="journal article" date="1984" name="Nucleic Acids Res.">
        <title>Nucleotide sequence of the essential region of bacteriophage P4.</title>
        <authorList>
            <person name="Lin C.-S."/>
        </authorList>
    </citation>
    <scope>NUCLEOTIDE SEQUENCE [GENOMIC DNA]</scope>
</reference>
<reference key="3">
    <citation type="journal article" date="1990" name="Nucleic Acids Res.">
        <title>DNA sequence of satellite bacteriophage P4.</title>
        <authorList>
            <person name="Halling C."/>
            <person name="Calendar R."/>
            <person name="Christie G.E."/>
            <person name="Dale E.C."/>
            <person name="Deho G."/>
            <person name="Finkel S."/>
            <person name="Flensburg J."/>
            <person name="Ghisotti D."/>
            <person name="Kahn M.L."/>
            <person name="Lane K.B."/>
            <person name="Lin C.-S."/>
            <person name="Lindqvist B.H."/>
            <person name="Pierson L.S."/>
            <person name="Six E.W."/>
            <person name="Sunshine M.G."/>
            <person name="Ziermann R."/>
        </authorList>
    </citation>
    <scope>NUCLEOTIDE SEQUENCE [LARGE SCALE GENOMIC DNA]</scope>
</reference>
<dbReference type="EMBL" id="M29479">
    <property type="protein sequence ID" value="AAA32434.1"/>
    <property type="molecule type" value="Genomic_DNA"/>
</dbReference>
<dbReference type="EMBL" id="X02534">
    <property type="protein sequence ID" value="CAA26375.1"/>
    <property type="molecule type" value="Genomic_DNA"/>
</dbReference>
<dbReference type="EMBL" id="X51522">
    <property type="protein sequence ID" value="CAA35905.1"/>
    <property type="molecule type" value="Genomic_DNA"/>
</dbReference>
<dbReference type="RefSeq" id="NP_042043.1">
    <property type="nucleotide sequence ID" value="NC_001609.1"/>
</dbReference>
<dbReference type="KEGG" id="vg:1261088"/>
<dbReference type="OrthoDB" id="20184at10239"/>
<dbReference type="Proteomes" id="UP000009093">
    <property type="component" value="Genome"/>
</dbReference>
<dbReference type="GO" id="GO:0003677">
    <property type="term" value="F:DNA binding"/>
    <property type="evidence" value="ECO:0007669"/>
    <property type="project" value="UniProtKB-KW"/>
</dbReference>
<dbReference type="InterPro" id="IPR007684">
    <property type="entry name" value="Znf_Ogr/Delta"/>
</dbReference>
<dbReference type="Pfam" id="PF04606">
    <property type="entry name" value="Ogr_Delta"/>
    <property type="match status" value="2"/>
</dbReference>
<gene>
    <name type="primary">Delta</name>
</gene>
<accession>P12551</accession>
<organismHost>
    <name type="scientific">Escherichia coli</name>
    <dbReference type="NCBI Taxonomy" id="562"/>
</organismHost>
<feature type="chain" id="PRO_0000165230" description="Transactivation protein">
    <location>
        <begin position="1"/>
        <end position="166"/>
    </location>
</feature>
<sequence>MIYCPSCGHVAHTRRAHFMDDGTKIMIAQCRNIYCSATFEASESFFSDSKDSGMEYISGKQRYRDSLTSASCGMKRPKRMLVTGYCCRRCKGLALSRTSRRLSQEVTERFYVCTDPGCGLVFKTLQTINRFIVRPVTPDELAERLHEKQELPPVRLKTQSYSLRLE</sequence>
<name>VDEL_BPP4</name>